<name>MRGX2_GORGO</name>
<dbReference type="EMBL" id="AY651167">
    <property type="protein sequence ID" value="AAW70080.1"/>
    <property type="molecule type" value="Genomic_DNA"/>
</dbReference>
<dbReference type="EMBL" id="AY651168">
    <property type="protein sequence ID" value="AAW70081.1"/>
    <property type="molecule type" value="Genomic_DNA"/>
</dbReference>
<dbReference type="RefSeq" id="XP_004050859.2">
    <property type="nucleotide sequence ID" value="XM_004050811.2"/>
</dbReference>
<dbReference type="RefSeq" id="XP_018891557.1">
    <property type="nucleotide sequence ID" value="XM_019036012.1"/>
</dbReference>
<dbReference type="SMR" id="Q4QXU0"/>
<dbReference type="FunCoup" id="Q4QXU0">
    <property type="interactions" value="241"/>
</dbReference>
<dbReference type="STRING" id="9593.ENSGGOP00000035489"/>
<dbReference type="Ensembl" id="ENSGGOT00000015883.3">
    <property type="protein sequence ID" value="ENSGGOP00000035489.1"/>
    <property type="gene ID" value="ENSGGOG00000015832.3"/>
</dbReference>
<dbReference type="GeneID" id="101146219"/>
<dbReference type="CTD" id="117194"/>
<dbReference type="GeneTree" id="ENSGT01030000234639"/>
<dbReference type="InParanoid" id="Q4QXU0"/>
<dbReference type="OMA" id="ESTTMNG"/>
<dbReference type="OrthoDB" id="13790at9604"/>
<dbReference type="Proteomes" id="UP000001519">
    <property type="component" value="Chromosome 11"/>
</dbReference>
<dbReference type="Bgee" id="ENSGGOG00000015832">
    <property type="expression patterns" value="Expressed in testis"/>
</dbReference>
<dbReference type="GO" id="GO:0005886">
    <property type="term" value="C:plasma membrane"/>
    <property type="evidence" value="ECO:0000318"/>
    <property type="project" value="GO_Central"/>
</dbReference>
<dbReference type="GO" id="GO:0004930">
    <property type="term" value="F:G protein-coupled receptor activity"/>
    <property type="evidence" value="ECO:0000250"/>
    <property type="project" value="UniProtKB"/>
</dbReference>
<dbReference type="GO" id="GO:1990595">
    <property type="term" value="F:mast cell secretagogue receptor activity"/>
    <property type="evidence" value="ECO:0000250"/>
    <property type="project" value="UniProtKB"/>
</dbReference>
<dbReference type="GO" id="GO:0042923">
    <property type="term" value="F:neuropeptide binding"/>
    <property type="evidence" value="ECO:0007669"/>
    <property type="project" value="Ensembl"/>
</dbReference>
<dbReference type="GO" id="GO:0007186">
    <property type="term" value="P:G protein-coupled receptor signaling pathway"/>
    <property type="evidence" value="ECO:0000318"/>
    <property type="project" value="GO_Central"/>
</dbReference>
<dbReference type="GO" id="GO:0045576">
    <property type="term" value="P:mast cell activation"/>
    <property type="evidence" value="ECO:0000250"/>
    <property type="project" value="UniProtKB"/>
</dbReference>
<dbReference type="GO" id="GO:0043303">
    <property type="term" value="P:mast cell degranulation"/>
    <property type="evidence" value="ECO:0000250"/>
    <property type="project" value="UniProtKB"/>
</dbReference>
<dbReference type="GO" id="GO:0032467">
    <property type="term" value="P:positive regulation of cytokinesis"/>
    <property type="evidence" value="ECO:0007669"/>
    <property type="project" value="Ensembl"/>
</dbReference>
<dbReference type="FunFam" id="1.20.1070.10:FF:000140">
    <property type="entry name" value="Mas-related G-protein coupled receptor member X2"/>
    <property type="match status" value="1"/>
</dbReference>
<dbReference type="Gene3D" id="1.20.1070.10">
    <property type="entry name" value="Rhodopsin 7-helix transmembrane proteins"/>
    <property type="match status" value="1"/>
</dbReference>
<dbReference type="InterPro" id="IPR000276">
    <property type="entry name" value="GPCR_Rhodpsn"/>
</dbReference>
<dbReference type="InterPro" id="IPR017452">
    <property type="entry name" value="GPCR_Rhodpsn_7TM"/>
</dbReference>
<dbReference type="InterPro" id="IPR026234">
    <property type="entry name" value="MRGPCRFAMILY"/>
</dbReference>
<dbReference type="PANTHER" id="PTHR11334">
    <property type="entry name" value="MAS-RELATED G-PROTEIN COUPLED RECEPTOR"/>
    <property type="match status" value="1"/>
</dbReference>
<dbReference type="PANTHER" id="PTHR11334:SF29">
    <property type="entry name" value="MAS-RELATED G-PROTEIN COUPLED RECEPTOR MEMBER X2"/>
    <property type="match status" value="1"/>
</dbReference>
<dbReference type="Pfam" id="PF00001">
    <property type="entry name" value="7tm_1"/>
    <property type="match status" value="1"/>
</dbReference>
<dbReference type="PRINTS" id="PR00237">
    <property type="entry name" value="GPCRRHODOPSN"/>
</dbReference>
<dbReference type="PRINTS" id="PR02108">
    <property type="entry name" value="MRGPCRFAMILY"/>
</dbReference>
<dbReference type="SUPFAM" id="SSF81321">
    <property type="entry name" value="Family A G protein-coupled receptor-like"/>
    <property type="match status" value="1"/>
</dbReference>
<dbReference type="PROSITE" id="PS00237">
    <property type="entry name" value="G_PROTEIN_RECEP_F1_1"/>
    <property type="match status" value="1"/>
</dbReference>
<dbReference type="PROSITE" id="PS50262">
    <property type="entry name" value="G_PROTEIN_RECEP_F1_2"/>
    <property type="match status" value="1"/>
</dbReference>
<reference key="1">
    <citation type="journal article" date="2005" name="Gene">
        <title>Adaptive evolution of MRGX2, a human sensory neuron specific gene involved in nociception.</title>
        <authorList>
            <person name="Yang S."/>
            <person name="Liu Y."/>
            <person name="Lin A.A."/>
            <person name="Cavalli-Sforza L.L."/>
            <person name="Zhao Z."/>
            <person name="Su B."/>
        </authorList>
    </citation>
    <scope>NUCLEOTIDE SEQUENCE [GENOMIC DNA]</scope>
</reference>
<evidence type="ECO:0000250" key="1">
    <source>
        <dbReference type="UniProtKB" id="Q3KNA1"/>
    </source>
</evidence>
<evidence type="ECO:0000255" key="2"/>
<evidence type="ECO:0000255" key="3">
    <source>
        <dbReference type="PROSITE-ProRule" id="PRU00521"/>
    </source>
</evidence>
<accession>Q4QXU0</accession>
<feature type="chain" id="PRO_0000069774" description="Mas-related G-protein coupled receptor member X2">
    <location>
        <begin position="1"/>
        <end position="329"/>
    </location>
</feature>
<feature type="topological domain" description="Extracellular" evidence="2">
    <location>
        <begin position="1"/>
        <end position="33"/>
    </location>
</feature>
<feature type="transmembrane region" description="Helical; Name=1" evidence="2">
    <location>
        <begin position="34"/>
        <end position="54"/>
    </location>
</feature>
<feature type="topological domain" description="Cytoplasmic" evidence="2">
    <location>
        <begin position="55"/>
        <end position="63"/>
    </location>
</feature>
<feature type="transmembrane region" description="Helical; Name=2" evidence="2">
    <location>
        <begin position="64"/>
        <end position="84"/>
    </location>
</feature>
<feature type="topological domain" description="Extracellular" evidence="2">
    <location>
        <begin position="85"/>
        <end position="96"/>
    </location>
</feature>
<feature type="transmembrane region" description="Helical; Name=3" evidence="2">
    <location>
        <begin position="97"/>
        <end position="117"/>
    </location>
</feature>
<feature type="topological domain" description="Cytoplasmic" evidence="2">
    <location>
        <begin position="118"/>
        <end position="144"/>
    </location>
</feature>
<feature type="transmembrane region" description="Helical; Name=4" evidence="2">
    <location>
        <begin position="145"/>
        <end position="165"/>
    </location>
</feature>
<feature type="topological domain" description="Extracellular" evidence="2">
    <location>
        <begin position="166"/>
        <end position="183"/>
    </location>
</feature>
<feature type="transmembrane region" description="Helical; Name=5" evidence="2">
    <location>
        <begin position="184"/>
        <end position="204"/>
    </location>
</feature>
<feature type="topological domain" description="Cytoplasmic" evidence="2">
    <location>
        <begin position="205"/>
        <end position="227"/>
    </location>
</feature>
<feature type="transmembrane region" description="Helical; Name=6" evidence="2">
    <location>
        <begin position="228"/>
        <end position="248"/>
    </location>
</feature>
<feature type="topological domain" description="Extracellular" evidence="2">
    <location>
        <begin position="249"/>
        <end position="263"/>
    </location>
</feature>
<feature type="transmembrane region" description="Helical; Name=7" evidence="2">
    <location>
        <begin position="264"/>
        <end position="284"/>
    </location>
</feature>
<feature type="topological domain" description="Cytoplasmic" evidence="2">
    <location>
        <begin position="285"/>
        <end position="329"/>
    </location>
</feature>
<proteinExistence type="inferred from homology"/>
<organism>
    <name type="scientific">Gorilla gorilla gorilla</name>
    <name type="common">Western lowland gorilla</name>
    <dbReference type="NCBI Taxonomy" id="9595"/>
    <lineage>
        <taxon>Eukaryota</taxon>
        <taxon>Metazoa</taxon>
        <taxon>Chordata</taxon>
        <taxon>Craniata</taxon>
        <taxon>Vertebrata</taxon>
        <taxon>Euteleostomi</taxon>
        <taxon>Mammalia</taxon>
        <taxon>Eutheria</taxon>
        <taxon>Euarchontoglires</taxon>
        <taxon>Primates</taxon>
        <taxon>Haplorrhini</taxon>
        <taxon>Catarrhini</taxon>
        <taxon>Hominidae</taxon>
        <taxon>Gorilla</taxon>
    </lineage>
</organism>
<keyword id="KW-1003">Cell membrane</keyword>
<keyword id="KW-0297">G-protein coupled receptor</keyword>
<keyword id="KW-0472">Membrane</keyword>
<keyword id="KW-0675">Receptor</keyword>
<keyword id="KW-1185">Reference proteome</keyword>
<keyword id="KW-0807">Transducer</keyword>
<keyword id="KW-0812">Transmembrane</keyword>
<keyword id="KW-1133">Transmembrane helix</keyword>
<sequence>MDPTTPAWRTESTTMNGNDQALPLLCGKEILISVFLILFIALVGLVGNGFVLWLLGFRMRRNAFSVYVLSLAGADFLFLCFQIINCLVYLSNFFCSSSINFPSFFTTVMTCAYLAGLSMLSTISTERCLSVLWPIWYRCRRPRHLSAVACVLLWALSLLLSILEGKFCGLFGDGDSGWCQTFDLITAAWLIFLFMVLCGSSLALLVRILCGSRGLPLTRLYLTILLTVLVFLLCGLPFGIQWFLILWIWKNSDVLFCHIHPVSVVLSSLNSSANPIIYFFVGSFRKQWQLQQPILKLALQRALQDIAEVDHSEGCFRQGTPEMSRSSLV</sequence>
<protein>
    <recommendedName>
        <fullName>Mas-related G-protein coupled receptor member X2</fullName>
    </recommendedName>
</protein>
<gene>
    <name type="primary">MRGPRX2</name>
    <name type="synonym">MRGX2</name>
</gene>
<comment type="function">
    <text evidence="1">Mast cell-specific receptor for basic secretagogues, i.e. cationic amphiphilic drugs, as well as endo- or exogenous peptides, consisting of a basic head group and a hydrophobic core. Recognizes and binds small molecules containing a cyclized tetrahydroisoquinoline (THIQ), such as non-steroidal neuromuscular blocking drugs (NMBDs), including tubocurarine and atracurium. In response to these compounds, mediates pseudo-allergic reactions characterized by histamine release, inflammation and airway contraction.</text>
</comment>
<comment type="subcellular location">
    <subcellularLocation>
        <location evidence="2">Cell membrane</location>
        <topology evidence="2">Multi-pass membrane protein</topology>
    </subcellularLocation>
</comment>
<comment type="similarity">
    <text evidence="3">Belongs to the G-protein coupled receptor 1 family. Mas subfamily.</text>
</comment>